<evidence type="ECO:0000255" key="1">
    <source>
        <dbReference type="HAMAP-Rule" id="MF_01310"/>
    </source>
</evidence>
<evidence type="ECO:0000305" key="2"/>
<keyword id="KW-1185">Reference proteome</keyword>
<keyword id="KW-0687">Ribonucleoprotein</keyword>
<keyword id="KW-0689">Ribosomal protein</keyword>
<keyword id="KW-0694">RNA-binding</keyword>
<keyword id="KW-0699">rRNA-binding</keyword>
<name>RS11_LACPL</name>
<sequence>MATRKTTRRRRVKKNIESGVAHIHSTFNNTLVMITDMQGNAIAWSSAGSLGFKGSRKSTPFAAQMAAEAAAKASMEHGMKTVEVAVKGPGSGREAAIRALQATGLEVSAIRDVTPVPHNGSRPPKRRRV</sequence>
<accession>Q88XW1</accession>
<accession>F9UMN0</accession>
<feature type="chain" id="PRO_0000123162" description="Small ribosomal subunit protein uS11">
    <location>
        <begin position="1"/>
        <end position="129"/>
    </location>
</feature>
<organism>
    <name type="scientific">Lactiplantibacillus plantarum (strain ATCC BAA-793 / NCIMB 8826 / WCFS1)</name>
    <name type="common">Lactobacillus plantarum</name>
    <dbReference type="NCBI Taxonomy" id="220668"/>
    <lineage>
        <taxon>Bacteria</taxon>
        <taxon>Bacillati</taxon>
        <taxon>Bacillota</taxon>
        <taxon>Bacilli</taxon>
        <taxon>Lactobacillales</taxon>
        <taxon>Lactobacillaceae</taxon>
        <taxon>Lactiplantibacillus</taxon>
    </lineage>
</organism>
<proteinExistence type="inferred from homology"/>
<gene>
    <name evidence="1" type="primary">rpsK</name>
    <name type="ordered locus">lp_1061</name>
</gene>
<reference key="1">
    <citation type="journal article" date="2003" name="Proc. Natl. Acad. Sci. U.S.A.">
        <title>Complete genome sequence of Lactobacillus plantarum WCFS1.</title>
        <authorList>
            <person name="Kleerebezem M."/>
            <person name="Boekhorst J."/>
            <person name="van Kranenburg R."/>
            <person name="Molenaar D."/>
            <person name="Kuipers O.P."/>
            <person name="Leer R."/>
            <person name="Tarchini R."/>
            <person name="Peters S.A."/>
            <person name="Sandbrink H.M."/>
            <person name="Fiers M.W.E.J."/>
            <person name="Stiekema W."/>
            <person name="Klein Lankhorst R.M."/>
            <person name="Bron P.A."/>
            <person name="Hoffer S.M."/>
            <person name="Nierop Groot M.N."/>
            <person name="Kerkhoven R."/>
            <person name="De Vries M."/>
            <person name="Ursing B."/>
            <person name="De Vos W.M."/>
            <person name="Siezen R.J."/>
        </authorList>
    </citation>
    <scope>NUCLEOTIDE SEQUENCE [LARGE SCALE GENOMIC DNA]</scope>
    <source>
        <strain>ATCC BAA-793 / NCIMB 8826 / WCFS1</strain>
    </source>
</reference>
<reference key="2">
    <citation type="journal article" date="2012" name="J. Bacteriol.">
        <title>Complete resequencing and reannotation of the Lactobacillus plantarum WCFS1 genome.</title>
        <authorList>
            <person name="Siezen R.J."/>
            <person name="Francke C."/>
            <person name="Renckens B."/>
            <person name="Boekhorst J."/>
            <person name="Wels M."/>
            <person name="Kleerebezem M."/>
            <person name="van Hijum S.A."/>
        </authorList>
    </citation>
    <scope>NUCLEOTIDE SEQUENCE [LARGE SCALE GENOMIC DNA]</scope>
    <scope>GENOME REANNOTATION</scope>
    <source>
        <strain>ATCC BAA-793 / NCIMB 8826 / WCFS1</strain>
    </source>
</reference>
<comment type="function">
    <text evidence="1">Located on the platform of the 30S subunit, it bridges several disparate RNA helices of the 16S rRNA. Forms part of the Shine-Dalgarno cleft in the 70S ribosome.</text>
</comment>
<comment type="subunit">
    <text evidence="1">Part of the 30S ribosomal subunit. Interacts with proteins S7 and S18. Binds to IF-3.</text>
</comment>
<comment type="similarity">
    <text evidence="1">Belongs to the universal ribosomal protein uS11 family.</text>
</comment>
<protein>
    <recommendedName>
        <fullName evidence="1">Small ribosomal subunit protein uS11</fullName>
    </recommendedName>
    <alternativeName>
        <fullName evidence="2">30S ribosomal protein S11</fullName>
    </alternativeName>
</protein>
<dbReference type="EMBL" id="AL935263">
    <property type="protein sequence ID" value="CCC78469.1"/>
    <property type="molecule type" value="Genomic_DNA"/>
</dbReference>
<dbReference type="RefSeq" id="WP_003641266.1">
    <property type="nucleotide sequence ID" value="NC_004567.2"/>
</dbReference>
<dbReference type="RefSeq" id="YP_004888983.1">
    <property type="nucleotide sequence ID" value="NC_004567.2"/>
</dbReference>
<dbReference type="SMR" id="Q88XW1"/>
<dbReference type="STRING" id="220668.lp_1061"/>
<dbReference type="EnsemblBacteria" id="CCC78469">
    <property type="protein sequence ID" value="CCC78469"/>
    <property type="gene ID" value="lp_1061"/>
</dbReference>
<dbReference type="GeneID" id="89668572"/>
<dbReference type="KEGG" id="lpl:lp_1061"/>
<dbReference type="PATRIC" id="fig|220668.9.peg.896"/>
<dbReference type="eggNOG" id="COG0100">
    <property type="taxonomic scope" value="Bacteria"/>
</dbReference>
<dbReference type="HOGENOM" id="CLU_072439_5_0_9"/>
<dbReference type="OrthoDB" id="9806415at2"/>
<dbReference type="PhylomeDB" id="Q88XW1"/>
<dbReference type="Proteomes" id="UP000000432">
    <property type="component" value="Chromosome"/>
</dbReference>
<dbReference type="GO" id="GO:1990904">
    <property type="term" value="C:ribonucleoprotein complex"/>
    <property type="evidence" value="ECO:0007669"/>
    <property type="project" value="UniProtKB-KW"/>
</dbReference>
<dbReference type="GO" id="GO:0005840">
    <property type="term" value="C:ribosome"/>
    <property type="evidence" value="ECO:0007669"/>
    <property type="project" value="UniProtKB-KW"/>
</dbReference>
<dbReference type="GO" id="GO:0019843">
    <property type="term" value="F:rRNA binding"/>
    <property type="evidence" value="ECO:0007669"/>
    <property type="project" value="UniProtKB-UniRule"/>
</dbReference>
<dbReference type="GO" id="GO:0003735">
    <property type="term" value="F:structural constituent of ribosome"/>
    <property type="evidence" value="ECO:0007669"/>
    <property type="project" value="InterPro"/>
</dbReference>
<dbReference type="GO" id="GO:0006412">
    <property type="term" value="P:translation"/>
    <property type="evidence" value="ECO:0007669"/>
    <property type="project" value="UniProtKB-UniRule"/>
</dbReference>
<dbReference type="FunFam" id="3.30.420.80:FF:000001">
    <property type="entry name" value="30S ribosomal protein S11"/>
    <property type="match status" value="1"/>
</dbReference>
<dbReference type="Gene3D" id="3.30.420.80">
    <property type="entry name" value="Ribosomal protein S11"/>
    <property type="match status" value="1"/>
</dbReference>
<dbReference type="HAMAP" id="MF_01310">
    <property type="entry name" value="Ribosomal_uS11"/>
    <property type="match status" value="1"/>
</dbReference>
<dbReference type="InterPro" id="IPR001971">
    <property type="entry name" value="Ribosomal_uS11"/>
</dbReference>
<dbReference type="InterPro" id="IPR019981">
    <property type="entry name" value="Ribosomal_uS11_bac-type"/>
</dbReference>
<dbReference type="InterPro" id="IPR018102">
    <property type="entry name" value="Ribosomal_uS11_CS"/>
</dbReference>
<dbReference type="InterPro" id="IPR036967">
    <property type="entry name" value="Ribosomal_uS11_sf"/>
</dbReference>
<dbReference type="NCBIfam" id="NF003698">
    <property type="entry name" value="PRK05309.1"/>
    <property type="match status" value="1"/>
</dbReference>
<dbReference type="NCBIfam" id="TIGR03632">
    <property type="entry name" value="uS11_bact"/>
    <property type="match status" value="1"/>
</dbReference>
<dbReference type="PANTHER" id="PTHR11759">
    <property type="entry name" value="40S RIBOSOMAL PROTEIN S14/30S RIBOSOMAL PROTEIN S11"/>
    <property type="match status" value="1"/>
</dbReference>
<dbReference type="Pfam" id="PF00411">
    <property type="entry name" value="Ribosomal_S11"/>
    <property type="match status" value="1"/>
</dbReference>
<dbReference type="PIRSF" id="PIRSF002131">
    <property type="entry name" value="Ribosomal_S11"/>
    <property type="match status" value="1"/>
</dbReference>
<dbReference type="SUPFAM" id="SSF53137">
    <property type="entry name" value="Translational machinery components"/>
    <property type="match status" value="1"/>
</dbReference>
<dbReference type="PROSITE" id="PS00054">
    <property type="entry name" value="RIBOSOMAL_S11"/>
    <property type="match status" value="1"/>
</dbReference>